<feature type="signal peptide" evidence="2">
    <location>
        <begin position="1"/>
        <end position="18"/>
    </location>
</feature>
<feature type="chain" id="PRO_5036441048" description="Yellow-related salivary protein LJM11" evidence="12">
    <location>
        <begin position="19"/>
        <end position="399"/>
    </location>
</feature>
<feature type="binding site" evidence="3 15">
    <location>
        <position position="345"/>
    </location>
    <ligand>
        <name>serotonin</name>
        <dbReference type="ChEBI" id="CHEBI:350546"/>
    </ligand>
</feature>
<feature type="binding site" evidence="3 15">
    <location>
        <position position="360"/>
    </location>
    <ligand>
        <name>serotonin</name>
        <dbReference type="ChEBI" id="CHEBI:350546"/>
    </ligand>
</feature>
<feature type="binding site" evidence="3 15">
    <location>
        <position position="362"/>
    </location>
    <ligand>
        <name>serotonin</name>
        <dbReference type="ChEBI" id="CHEBI:350546"/>
    </ligand>
</feature>
<feature type="glycosylation site" description="N-linked (GlcNAc...) asparagine" evidence="1">
    <location>
        <position position="213"/>
    </location>
</feature>
<feature type="disulfide bond" evidence="3 17">
    <location>
        <begin position="115"/>
        <end position="186"/>
    </location>
</feature>
<feature type="disulfide bond" evidence="3 16 17 18">
    <location>
        <begin position="319"/>
        <end position="395"/>
    </location>
</feature>
<feature type="strand" evidence="19">
    <location>
        <begin position="22"/>
        <end position="28"/>
    </location>
</feature>
<feature type="helix" evidence="19">
    <location>
        <begin position="41"/>
        <end position="43"/>
    </location>
</feature>
<feature type="strand" evidence="19">
    <location>
        <begin position="48"/>
        <end position="52"/>
    </location>
</feature>
<feature type="turn" evidence="19">
    <location>
        <begin position="53"/>
        <end position="56"/>
    </location>
</feature>
<feature type="strand" evidence="19">
    <location>
        <begin position="57"/>
        <end position="61"/>
    </location>
</feature>
<feature type="strand" evidence="19">
    <location>
        <begin position="64"/>
        <end position="66"/>
    </location>
</feature>
<feature type="strand" evidence="19">
    <location>
        <begin position="72"/>
        <end position="77"/>
    </location>
</feature>
<feature type="helix" evidence="19">
    <location>
        <begin position="78"/>
        <end position="81"/>
    </location>
</feature>
<feature type="strand" evidence="19">
    <location>
        <begin position="92"/>
        <end position="94"/>
    </location>
</feature>
<feature type="strand" evidence="19">
    <location>
        <begin position="99"/>
        <end position="101"/>
    </location>
</feature>
<feature type="strand" evidence="19">
    <location>
        <begin position="103"/>
        <end position="105"/>
    </location>
</feature>
<feature type="strand" evidence="19">
    <location>
        <begin position="107"/>
        <end position="112"/>
    </location>
</feature>
<feature type="strand" evidence="19">
    <location>
        <begin position="117"/>
        <end position="122"/>
    </location>
</feature>
<feature type="strand" evidence="20">
    <location>
        <begin position="127"/>
        <end position="130"/>
    </location>
</feature>
<feature type="helix" evidence="19">
    <location>
        <begin position="133"/>
        <end position="135"/>
    </location>
</feature>
<feature type="strand" evidence="19">
    <location>
        <begin position="142"/>
        <end position="150"/>
    </location>
</feature>
<feature type="strand" evidence="19">
    <location>
        <begin position="155"/>
        <end position="160"/>
    </location>
</feature>
<feature type="helix" evidence="19">
    <location>
        <begin position="163"/>
        <end position="165"/>
    </location>
</feature>
<feature type="helix" evidence="19">
    <location>
        <begin position="169"/>
        <end position="171"/>
    </location>
</feature>
<feature type="strand" evidence="19">
    <location>
        <begin position="172"/>
        <end position="180"/>
    </location>
</feature>
<feature type="turn" evidence="19">
    <location>
        <begin position="182"/>
        <end position="185"/>
    </location>
</feature>
<feature type="strand" evidence="19">
    <location>
        <begin position="188"/>
        <end position="195"/>
    </location>
</feature>
<feature type="turn" evidence="19">
    <location>
        <begin position="196"/>
        <end position="199"/>
    </location>
</feature>
<feature type="strand" evidence="19">
    <location>
        <begin position="200"/>
        <end position="205"/>
    </location>
</feature>
<feature type="turn" evidence="19">
    <location>
        <begin position="206"/>
        <end position="209"/>
    </location>
</feature>
<feature type="strand" evidence="19">
    <location>
        <begin position="210"/>
        <end position="215"/>
    </location>
</feature>
<feature type="helix" evidence="19">
    <location>
        <begin position="217"/>
        <end position="219"/>
    </location>
</feature>
<feature type="strand" evidence="19">
    <location>
        <begin position="225"/>
        <end position="229"/>
    </location>
</feature>
<feature type="strand" evidence="19">
    <location>
        <begin position="232"/>
        <end position="236"/>
    </location>
</feature>
<feature type="strand" evidence="19">
    <location>
        <begin position="240"/>
        <end position="245"/>
    </location>
</feature>
<feature type="strand" evidence="19">
    <location>
        <begin position="255"/>
        <end position="262"/>
    </location>
</feature>
<feature type="strand" evidence="19">
    <location>
        <begin position="264"/>
        <end position="270"/>
    </location>
</feature>
<feature type="helix" evidence="19">
    <location>
        <begin position="271"/>
        <end position="274"/>
    </location>
</feature>
<feature type="strand" evidence="19">
    <location>
        <begin position="284"/>
        <end position="288"/>
    </location>
</feature>
<feature type="strand" evidence="19">
    <location>
        <begin position="295"/>
        <end position="300"/>
    </location>
</feature>
<feature type="turn" evidence="19">
    <location>
        <begin position="302"/>
        <end position="304"/>
    </location>
</feature>
<feature type="strand" evidence="19">
    <location>
        <begin position="306"/>
        <end position="321"/>
    </location>
</feature>
<feature type="strand" evidence="20">
    <location>
        <begin position="324"/>
        <end position="327"/>
    </location>
</feature>
<feature type="helix" evidence="19">
    <location>
        <begin position="329"/>
        <end position="331"/>
    </location>
</feature>
<feature type="strand" evidence="19">
    <location>
        <begin position="332"/>
        <end position="337"/>
    </location>
</feature>
<feature type="strand" evidence="19">
    <location>
        <begin position="343"/>
        <end position="349"/>
    </location>
</feature>
<feature type="strand" evidence="19">
    <location>
        <begin position="355"/>
        <end position="359"/>
    </location>
</feature>
<feature type="helix" evidence="19">
    <location>
        <begin position="368"/>
        <end position="370"/>
    </location>
</feature>
<feature type="strand" evidence="19">
    <location>
        <begin position="377"/>
        <end position="384"/>
    </location>
</feature>
<feature type="helix" evidence="19">
    <location>
        <begin position="386"/>
        <end position="390"/>
    </location>
</feature>
<keyword id="KW-0002">3D-structure</keyword>
<keyword id="KW-0020">Allergen</keyword>
<keyword id="KW-0903">Direct protein sequencing</keyword>
<keyword id="KW-1015">Disulfide bond</keyword>
<keyword id="KW-0325">Glycoprotein</keyword>
<keyword id="KW-0964">Secreted</keyword>
<keyword id="KW-0732">Signal</keyword>
<organism evidence="13">
    <name type="scientific">Lutzomyia longipalpis</name>
    <name type="common">Sand fly</name>
    <dbReference type="NCBI Taxonomy" id="7200"/>
    <lineage>
        <taxon>Eukaryota</taxon>
        <taxon>Metazoa</taxon>
        <taxon>Ecdysozoa</taxon>
        <taxon>Arthropoda</taxon>
        <taxon>Hexapoda</taxon>
        <taxon>Insecta</taxon>
        <taxon>Pterygota</taxon>
        <taxon>Neoptera</taxon>
        <taxon>Endopterygota</taxon>
        <taxon>Diptera</taxon>
        <taxon>Nematocera</taxon>
        <taxon>Psychodoidea</taxon>
        <taxon>Psychodidae</taxon>
        <taxon>Lutzomyia</taxon>
        <taxon>Lutzomyia</taxon>
    </lineage>
</organism>
<protein>
    <recommendedName>
        <fullName evidence="12">Yellow-related salivary protein LJM11</fullName>
    </recommendedName>
    <alternativeName>
        <fullName evidence="11">LJM11</fullName>
    </alternativeName>
    <alternativeName>
        <fullName evidence="9">LJM11_Clu9</fullName>
    </alternativeName>
    <alternativeName>
        <fullName evidence="14">Putative major royal jelly protein</fullName>
    </alternativeName>
    <allergenName evidence="12">Lut lo LJM11</allergenName>
</protein>
<comment type="function">
    <text evidence="3 4 6 7 8 12">Probably modulates blood feeding of sand flies on vertebrate species by binding and sequestering different mediators involved in the host response (Probable). Binds biogenic amines (PubMed:21795673). Binds serotonin with high affinity (PubMed:21795673, PubMed:31604119). Binds adrenaline and noradrenaline (PubMed:21795673, PubMed:31604119). Binds dopamine and octopamine (PubMed:21795673, PubMed:31604119). Poorly binds histamine (PubMed:31604119). Induces a delayed type hypersensitivity response in host tissues (PubMed:21795673). Induces systemic Th1 immune response in the host (PubMed:21795673, PubMed:22739793, PubMed:29037520). Immunogenic; elicits antibody production in the host (PubMed:21795673, PubMed:29037520). Functions as a chemoattractant for host neutrophils; likely acts through a G-protein-coupled receptor and effect is dependent on calcium influx (PubMed:34050141).</text>
</comment>
<comment type="function">
    <text evidence="3 4 6">(Microbial infection) Modulates infection caused by Leishmania species in the host.</text>
</comment>
<comment type="subcellular location">
    <subcellularLocation>
        <location evidence="12">Secreted</location>
    </subcellularLocation>
</comment>
<comment type="tissue specificity">
    <text evidence="2">Salivary gland (at protein level).</text>
</comment>
<comment type="allergen">
    <text evidence="5 10 12">Causes an allergic reaction in human (Probable). Binds to IgE (PubMed:25285921). May play a role in the onset of fogo selvagem, an endemic form of pemphigus foliaceus prevalent in certain regions of Brazil, by triggering autoimmune responses (PubMed:25285921).</text>
</comment>
<comment type="miscellaneous">
    <text evidence="3 6">Vaccination against the protein protects mice from different Leishmania species, such as Leishmania major and Leishmania braziliensis, when infection occurs in the presence of L.longipalpis salivary gland homogenates or after L.longipalpis bites.</text>
</comment>
<comment type="similarity">
    <text evidence="12">Belongs to the major royal jelly protein family.</text>
</comment>
<reference evidence="13" key="1">
    <citation type="journal article" date="2004" name="J. Exp. Biol.">
        <title>Identification of the most abundant secreted proteins from the salivary glands of the sand fly Lutzomyia longipalpis, vector of Leishmania chagasi.</title>
        <authorList>
            <person name="Valenzuela J.G."/>
            <person name="Garfield M."/>
            <person name="Rowton E.D."/>
            <person name="Pham V.M."/>
        </authorList>
    </citation>
    <scope>NUCLEOTIDE SEQUENCE [LARGE SCALE MRNA]</scope>
    <scope>PROTEIN SEQUENCE OF 19-30</scope>
    <scope>TISSUE SPECIFICITY</scope>
    <source>
        <tissue evidence="13">Salivary gland</tissue>
    </source>
</reference>
<reference evidence="14" key="2">
    <citation type="journal article" date="2020" name="BMC Genomics">
        <title>Leishmania infection induces a limited differential gene expression in the sand fly midgut.</title>
        <authorList>
            <person name="Coutinho-Abreu I.V."/>
            <person name="Serafim T.D."/>
            <person name="Meneses C."/>
            <person name="Kamhawi S."/>
            <person name="Oliveira F."/>
            <person name="Valenzuela J.G."/>
        </authorList>
    </citation>
    <scope>NUCLEOTIDE SEQUENCE [LARGE SCALE MRNA]</scope>
    <source>
        <strain evidence="14">Jacobina</strain>
        <tissue evidence="14">Midgut</tissue>
    </source>
</reference>
<reference evidence="12" key="3">
    <citation type="journal article" date="2012" name="J. Invest. Dermatol.">
        <title>Immunity to sand fly salivary protein LJM11 modulates host response to vector-transmitted leishmania conferring ulcer-free protection.</title>
        <authorList>
            <person name="Gomes R."/>
            <person name="Oliveira F."/>
            <person name="Teixeira C."/>
            <person name="Meneses C."/>
            <person name="Gilmore D.C."/>
            <person name="Elnaiem D.E."/>
            <person name="Kamhawi S."/>
            <person name="Valenzuela J.G."/>
        </authorList>
    </citation>
    <scope>FUNCTION</scope>
    <scope>FUNCTION (MICROBIAL INFECTION)</scope>
</reference>
<reference evidence="12" key="4">
    <citation type="journal article" date="2015" name="J. Invest. Dermatol.">
        <title>IgE anti-LJM11 sand fly salivary antigen may herald the onset of fogo selvagem in endemic Brazilian regions.</title>
        <authorList>
            <person name="Qian Y."/>
            <person name="Jeong J.S."/>
            <person name="Abdeladhim M."/>
            <person name="Valenzuela J.G."/>
            <person name="Aoki V."/>
            <person name="Hans-Filhio G."/>
            <person name="Rivitti E.A."/>
            <person name="Diaz L.A."/>
        </authorList>
    </citation>
    <scope>ALLERGEN</scope>
</reference>
<reference evidence="12" key="5">
    <citation type="journal article" date="2018" name="Acta Trop.">
        <title>Immunization with LJM11 salivary protein protects against infection with Leishmania braziliensis in the presence of Lutzomyia longipalpis saliva.</title>
        <authorList>
            <person name="Cunha J.M."/>
            <person name="Abbehusen M."/>
            <person name="Suarez M."/>
            <person name="Valenzuela J."/>
            <person name="Teixeira C.R."/>
            <person name="Brodskyn C.I."/>
        </authorList>
    </citation>
    <scope>FUNCTION</scope>
    <scope>FUNCTION (MICROBIAL INFECTION)</scope>
</reference>
<reference evidence="12" key="6">
    <citation type="journal article" date="2019" name="Insect Biochem. Mol. Biol.">
        <title>Amine-binding properties of salivary yellow-related proteins in phlebotomine sand flies.</title>
        <authorList>
            <person name="Sumova P."/>
            <person name="Sima M."/>
            <person name="Kalouskova B."/>
            <person name="Polanska N."/>
            <person name="Vanek O."/>
            <person name="Oliveira F."/>
            <person name="Valenzuela J.G."/>
            <person name="Volf P."/>
        </authorList>
    </citation>
    <scope>FUNCTION</scope>
</reference>
<reference key="7">
    <citation type="journal article" date="2021" name="Nat. Commun.">
        <title>A sand fly salivary protein acts as a neutrophil chemoattractant.</title>
        <authorList>
            <person name="Guimaraes-Costa A.B."/>
            <person name="Shannon J.P."/>
            <person name="Waclawiak I."/>
            <person name="Oliveira J."/>
            <person name="Meneses C."/>
            <person name="de Castro W."/>
            <person name="Wen X."/>
            <person name="Brzostowski J."/>
            <person name="Serafim T.D."/>
            <person name="Andersen J.F."/>
            <person name="Hickman H.D."/>
            <person name="Kamhawi S."/>
            <person name="Valenzuela J.G."/>
            <person name="Oliveira F."/>
        </authorList>
    </citation>
    <scope>FUNCTION</scope>
</reference>
<reference evidence="16 17 18" key="8">
    <citation type="journal article" date="2011" name="J. Biol. Chem.">
        <title>Structure and function of a 'yellow' protein from saliva of the sand fly Lutzomyia longipalpis that confers protective immunity against Leishmania major infection.</title>
        <authorList>
            <person name="Xu X."/>
            <person name="Oliveira F."/>
            <person name="Chang B.W."/>
            <person name="Collin N."/>
            <person name="Gomes R."/>
            <person name="Teixeira C."/>
            <person name="Reynoso D."/>
            <person name="My Pham V."/>
            <person name="Elnaiem D.E."/>
            <person name="Kamhawi S."/>
            <person name="Ribeiro J.M."/>
            <person name="Valenzuela J.G."/>
            <person name="Andersen J.F."/>
        </authorList>
    </citation>
    <scope>X-RAY CRYSTALLOGRAPHY (2.52 ANGSTROMS) OF 19-399 IN COMPLEX WITH SEROTONIN</scope>
    <scope>FUNCTION</scope>
    <scope>FUNCTION (MICROBIAL INFECTION)</scope>
    <scope>DISULFIDE BONDS</scope>
</reference>
<evidence type="ECO:0000255" key="1">
    <source>
        <dbReference type="PROSITE-ProRule" id="PRU00498"/>
    </source>
</evidence>
<evidence type="ECO:0000269" key="2">
    <source>
    </source>
</evidence>
<evidence type="ECO:0000269" key="3">
    <source>
    </source>
</evidence>
<evidence type="ECO:0000269" key="4">
    <source>
    </source>
</evidence>
<evidence type="ECO:0000269" key="5">
    <source>
    </source>
</evidence>
<evidence type="ECO:0000269" key="6">
    <source>
    </source>
</evidence>
<evidence type="ECO:0000269" key="7">
    <source>
    </source>
</evidence>
<evidence type="ECO:0000269" key="8">
    <source>
    </source>
</evidence>
<evidence type="ECO:0000303" key="9">
    <source>
    </source>
</evidence>
<evidence type="ECO:0000303" key="10">
    <source>
    </source>
</evidence>
<evidence type="ECO:0000303" key="11">
    <source>
    </source>
</evidence>
<evidence type="ECO:0000305" key="12"/>
<evidence type="ECO:0000312" key="13">
    <source>
        <dbReference type="EMBL" id="AAS05318.1"/>
    </source>
</evidence>
<evidence type="ECO:0000312" key="14">
    <source>
        <dbReference type="EMBL" id="MBC1174039.1"/>
    </source>
</evidence>
<evidence type="ECO:0000312" key="15">
    <source>
        <dbReference type="PDB" id="3Q6K"/>
    </source>
</evidence>
<evidence type="ECO:0000312" key="16">
    <source>
        <dbReference type="PDB" id="3Q6T"/>
    </source>
</evidence>
<evidence type="ECO:0007744" key="17">
    <source>
        <dbReference type="PDB" id="3Q6K"/>
    </source>
</evidence>
<evidence type="ECO:0007744" key="18">
    <source>
        <dbReference type="PDB" id="3Q6P"/>
    </source>
</evidence>
<evidence type="ECO:0007829" key="19">
    <source>
        <dbReference type="PDB" id="3Q6K"/>
    </source>
</evidence>
<evidence type="ECO:0007829" key="20">
    <source>
        <dbReference type="PDB" id="3Q6P"/>
    </source>
</evidence>
<sequence>MKVFFSIFTLVLFQGTLGADTQGYKWKQLLYNNVTPGSYNPDNMISTAFAYDAEGEKLFLAVPRKLPRVPYTLAEVDTKNSLGVKGKHSPLLNKFSGHKTGKELTSIYQPVIDDCRRLWVVDIGSVEYRSRGAKDYPSHRPAIVAYDLKQPNYPEVVRYYFPTRLVEKPTYFGGFAVDVANPKGDCSETFVYITNFLRGALFIYDHKKQDSWNVTHPTFKAERPTKFDYGGKEYEFKAGIFGITLGDRDSEGNRPAYYLAGSAIKVYSVNTKELKQKGGKLNPELLGNRGKYNDAIALAYDPKTKVIFFAEANTKQVSCWNTQKMPLRMKNTDVVYTSSRFVFGTDISVDSKGGLWFMSNGFPPIRKSEKFKYDFPRYRLMRIMDTQEAIAGTACDMNA</sequence>
<accession>Q5WPU9</accession>
<dbReference type="EMBL" id="AY445935">
    <property type="protein sequence ID" value="AAS05318.1"/>
    <property type="molecule type" value="mRNA"/>
</dbReference>
<dbReference type="EMBL" id="GITU01005336">
    <property type="protein sequence ID" value="MBC1174039.1"/>
    <property type="molecule type" value="Transcribed_RNA"/>
</dbReference>
<dbReference type="RefSeq" id="XP_055680123.1">
    <property type="nucleotide sequence ID" value="XM_055824148.1"/>
</dbReference>
<dbReference type="PDB" id="3Q6K">
    <property type="method" value="X-ray"/>
    <property type="resolution" value="2.52 A"/>
    <property type="chains" value="A/B=19-399"/>
</dbReference>
<dbReference type="PDB" id="3Q6P">
    <property type="method" value="X-ray"/>
    <property type="resolution" value="2.75 A"/>
    <property type="chains" value="A/B=19-399"/>
</dbReference>
<dbReference type="PDB" id="3Q6T">
    <property type="method" value="X-ray"/>
    <property type="resolution" value="2.93 A"/>
    <property type="chains" value="A/B=19-399"/>
</dbReference>
<dbReference type="PDBsum" id="3Q6K"/>
<dbReference type="PDBsum" id="3Q6P"/>
<dbReference type="PDBsum" id="3Q6T"/>
<dbReference type="SMR" id="Q5WPU9"/>
<dbReference type="Allergome" id="10162">
    <property type="allergen name" value="Lut lo LJM11"/>
</dbReference>
<dbReference type="EnsemblMetazoa" id="LLONM1_006584.R10080">
    <property type="protein sequence ID" value="LLONM1_006584.P10080"/>
    <property type="gene ID" value="LLONM1_006584"/>
</dbReference>
<dbReference type="GeneID" id="129788127"/>
<dbReference type="VEuPathDB" id="VectorBase:LLOJ001468"/>
<dbReference type="VEuPathDB" id="VectorBase:LLONM1_006584"/>
<dbReference type="OrthoDB" id="7776143at2759"/>
<dbReference type="EvolutionaryTrace" id="Q5WPU9"/>
<dbReference type="Proteomes" id="UP000092461">
    <property type="component" value="Unplaced"/>
</dbReference>
<dbReference type="GO" id="GO:0005576">
    <property type="term" value="C:extracellular region"/>
    <property type="evidence" value="ECO:0007669"/>
    <property type="project" value="UniProtKB-SubCell"/>
</dbReference>
<dbReference type="Gene3D" id="2.120.10.30">
    <property type="entry name" value="TolB, C-terminal domain"/>
    <property type="match status" value="1"/>
</dbReference>
<dbReference type="InterPro" id="IPR011042">
    <property type="entry name" value="6-blade_b-propeller_TolB-like"/>
</dbReference>
<dbReference type="InterPro" id="IPR017996">
    <property type="entry name" value="Royal_jelly/protein_yellow"/>
</dbReference>
<dbReference type="PANTHER" id="PTHR10009">
    <property type="entry name" value="PROTEIN YELLOW-RELATED"/>
    <property type="match status" value="1"/>
</dbReference>
<dbReference type="PANTHER" id="PTHR10009:SF11">
    <property type="entry name" value="RH54244P"/>
    <property type="match status" value="1"/>
</dbReference>
<dbReference type="Pfam" id="PF03022">
    <property type="entry name" value="MRJP"/>
    <property type="match status" value="1"/>
</dbReference>
<dbReference type="SUPFAM" id="SSF63825">
    <property type="entry name" value="YWTD domain"/>
    <property type="match status" value="1"/>
</dbReference>
<name>YP11_LUTLO</name>
<proteinExistence type="evidence at protein level"/>